<dbReference type="EC" id="1.5.1.3"/>
<dbReference type="EMBL" id="M20012">
    <property type="protein sequence ID" value="AAA22853.1"/>
    <property type="molecule type" value="Genomic_DNA"/>
</dbReference>
<dbReference type="EMBL" id="L77246">
    <property type="protein sequence ID" value="AAA96635.1"/>
    <property type="molecule type" value="Genomic_DNA"/>
</dbReference>
<dbReference type="EMBL" id="AL009126">
    <property type="protein sequence ID" value="CAB14099.1"/>
    <property type="molecule type" value="Genomic_DNA"/>
</dbReference>
<dbReference type="PIR" id="JT0291">
    <property type="entry name" value="RDBSD"/>
</dbReference>
<dbReference type="RefSeq" id="NP_390064.1">
    <property type="nucleotide sequence ID" value="NC_000964.3"/>
</dbReference>
<dbReference type="RefSeq" id="WP_003230799.1">
    <property type="nucleotide sequence ID" value="NZ_OZ025638.1"/>
</dbReference>
<dbReference type="PDB" id="8UVZ">
    <property type="method" value="X-ray"/>
    <property type="resolution" value="0.93 A"/>
    <property type="chains" value="A=1-168"/>
</dbReference>
<dbReference type="PDBsum" id="8UVZ"/>
<dbReference type="SMR" id="P11045"/>
<dbReference type="FunCoup" id="P11045">
    <property type="interactions" value="420"/>
</dbReference>
<dbReference type="STRING" id="224308.BSU21810"/>
<dbReference type="PaxDb" id="224308-BSU21810"/>
<dbReference type="EnsemblBacteria" id="CAB14099">
    <property type="protein sequence ID" value="CAB14099"/>
    <property type="gene ID" value="BSU_21810"/>
</dbReference>
<dbReference type="GeneID" id="939091"/>
<dbReference type="KEGG" id="bsu:BSU21810"/>
<dbReference type="PATRIC" id="fig|224308.179.peg.2383"/>
<dbReference type="eggNOG" id="COG0262">
    <property type="taxonomic scope" value="Bacteria"/>
</dbReference>
<dbReference type="InParanoid" id="P11045"/>
<dbReference type="OrthoDB" id="9804315at2"/>
<dbReference type="PhylomeDB" id="P11045"/>
<dbReference type="BioCyc" id="BSUB:BSU21810-MONOMER"/>
<dbReference type="UniPathway" id="UPA00077">
    <property type="reaction ID" value="UER00158"/>
</dbReference>
<dbReference type="Proteomes" id="UP000001570">
    <property type="component" value="Chromosome"/>
</dbReference>
<dbReference type="GO" id="GO:0005829">
    <property type="term" value="C:cytosol"/>
    <property type="evidence" value="ECO:0000318"/>
    <property type="project" value="GO_Central"/>
</dbReference>
<dbReference type="GO" id="GO:0004146">
    <property type="term" value="F:dihydrofolate reductase activity"/>
    <property type="evidence" value="ECO:0000318"/>
    <property type="project" value="GO_Central"/>
</dbReference>
<dbReference type="GO" id="GO:0050661">
    <property type="term" value="F:NADP binding"/>
    <property type="evidence" value="ECO:0000318"/>
    <property type="project" value="GO_Central"/>
</dbReference>
<dbReference type="GO" id="GO:0046452">
    <property type="term" value="P:dihydrofolate metabolic process"/>
    <property type="evidence" value="ECO:0000318"/>
    <property type="project" value="GO_Central"/>
</dbReference>
<dbReference type="GO" id="GO:0046655">
    <property type="term" value="P:folic acid metabolic process"/>
    <property type="evidence" value="ECO:0000318"/>
    <property type="project" value="GO_Central"/>
</dbReference>
<dbReference type="GO" id="GO:0006730">
    <property type="term" value="P:one-carbon metabolic process"/>
    <property type="evidence" value="ECO:0007669"/>
    <property type="project" value="UniProtKB-KW"/>
</dbReference>
<dbReference type="GO" id="GO:0046654">
    <property type="term" value="P:tetrahydrofolate biosynthetic process"/>
    <property type="evidence" value="ECO:0000318"/>
    <property type="project" value="GO_Central"/>
</dbReference>
<dbReference type="CDD" id="cd00209">
    <property type="entry name" value="DHFR"/>
    <property type="match status" value="1"/>
</dbReference>
<dbReference type="FunFam" id="3.40.430.10:FF:000001">
    <property type="entry name" value="Dihydrofolate reductase"/>
    <property type="match status" value="1"/>
</dbReference>
<dbReference type="Gene3D" id="3.40.430.10">
    <property type="entry name" value="Dihydrofolate Reductase, subunit A"/>
    <property type="match status" value="1"/>
</dbReference>
<dbReference type="InterPro" id="IPR012259">
    <property type="entry name" value="DHFR"/>
</dbReference>
<dbReference type="InterPro" id="IPR024072">
    <property type="entry name" value="DHFR-like_dom_sf"/>
</dbReference>
<dbReference type="InterPro" id="IPR017925">
    <property type="entry name" value="DHFR_CS"/>
</dbReference>
<dbReference type="InterPro" id="IPR001796">
    <property type="entry name" value="DHFR_dom"/>
</dbReference>
<dbReference type="PANTHER" id="PTHR48069">
    <property type="entry name" value="DIHYDROFOLATE REDUCTASE"/>
    <property type="match status" value="1"/>
</dbReference>
<dbReference type="PANTHER" id="PTHR48069:SF3">
    <property type="entry name" value="DIHYDROFOLATE REDUCTASE"/>
    <property type="match status" value="1"/>
</dbReference>
<dbReference type="Pfam" id="PF00186">
    <property type="entry name" value="DHFR_1"/>
    <property type="match status" value="1"/>
</dbReference>
<dbReference type="PIRSF" id="PIRSF000194">
    <property type="entry name" value="DHFR"/>
    <property type="match status" value="1"/>
</dbReference>
<dbReference type="PRINTS" id="PR00070">
    <property type="entry name" value="DHFR"/>
</dbReference>
<dbReference type="SUPFAM" id="SSF53597">
    <property type="entry name" value="Dihydrofolate reductase-like"/>
    <property type="match status" value="1"/>
</dbReference>
<dbReference type="PROSITE" id="PS00075">
    <property type="entry name" value="DHFR_1"/>
    <property type="match status" value="1"/>
</dbReference>
<dbReference type="PROSITE" id="PS51330">
    <property type="entry name" value="DHFR_2"/>
    <property type="match status" value="1"/>
</dbReference>
<organism>
    <name type="scientific">Bacillus subtilis (strain 168)</name>
    <dbReference type="NCBI Taxonomy" id="224308"/>
    <lineage>
        <taxon>Bacteria</taxon>
        <taxon>Bacillati</taxon>
        <taxon>Bacillota</taxon>
        <taxon>Bacilli</taxon>
        <taxon>Bacillales</taxon>
        <taxon>Bacillaceae</taxon>
        <taxon>Bacillus</taxon>
    </lineage>
</organism>
<proteinExistence type="evidence at protein level"/>
<keyword id="KW-0002">3D-structure</keyword>
<keyword id="KW-0903">Direct protein sequencing</keyword>
<keyword id="KW-0521">NADP</keyword>
<keyword id="KW-0554">One-carbon metabolism</keyword>
<keyword id="KW-0560">Oxidoreductase</keyword>
<keyword id="KW-1185">Reference proteome</keyword>
<reference key="1">
    <citation type="journal article" date="1988" name="Gene">
        <title>Nucleotide sequence of the thymidylate synthase B and dihydrofolate reductase genes contained in one Bacillus subtilis operon.</title>
        <authorList>
            <person name="Iwakura M."/>
            <person name="Kawata M."/>
            <person name="Tsuda K."/>
            <person name="Tanaka T."/>
        </authorList>
    </citation>
    <scope>NUCLEOTIDE SEQUENCE [GENOMIC DNA]</scope>
    <scope>PROTEIN SEQUENCE OF 1-8 AND 166-168</scope>
    <source>
        <strain>ATCC 33712 / MI112</strain>
    </source>
</reference>
<reference key="2">
    <citation type="journal article" date="1996" name="Microbiology">
        <title>Organization of the Bacillus subtilis 168 chromosome between kdg and the attachment site of the SP beta prophage: use of long accurate PCR and yeast artificial chromosomes for sequencing.</title>
        <authorList>
            <person name="Capuano V."/>
            <person name="Galleron N."/>
            <person name="Pujic P."/>
            <person name="Sorokin A."/>
            <person name="Ehrlich S.D."/>
        </authorList>
    </citation>
    <scope>NUCLEOTIDE SEQUENCE [GENOMIC DNA]</scope>
    <source>
        <strain>168 / Marburg / ATCC 6051 / DSM 10 / JCM 1465 / NBRC 13719 / NCIMB 3610 / NRRL NRS-744 / VKM B-501</strain>
    </source>
</reference>
<reference key="3">
    <citation type="journal article" date="1997" name="Nature">
        <title>The complete genome sequence of the Gram-positive bacterium Bacillus subtilis.</title>
        <authorList>
            <person name="Kunst F."/>
            <person name="Ogasawara N."/>
            <person name="Moszer I."/>
            <person name="Albertini A.M."/>
            <person name="Alloni G."/>
            <person name="Azevedo V."/>
            <person name="Bertero M.G."/>
            <person name="Bessieres P."/>
            <person name="Bolotin A."/>
            <person name="Borchert S."/>
            <person name="Borriss R."/>
            <person name="Boursier L."/>
            <person name="Brans A."/>
            <person name="Braun M."/>
            <person name="Brignell S.C."/>
            <person name="Bron S."/>
            <person name="Brouillet S."/>
            <person name="Bruschi C.V."/>
            <person name="Caldwell B."/>
            <person name="Capuano V."/>
            <person name="Carter N.M."/>
            <person name="Choi S.-K."/>
            <person name="Codani J.-J."/>
            <person name="Connerton I.F."/>
            <person name="Cummings N.J."/>
            <person name="Daniel R.A."/>
            <person name="Denizot F."/>
            <person name="Devine K.M."/>
            <person name="Duesterhoeft A."/>
            <person name="Ehrlich S.D."/>
            <person name="Emmerson P.T."/>
            <person name="Entian K.-D."/>
            <person name="Errington J."/>
            <person name="Fabret C."/>
            <person name="Ferrari E."/>
            <person name="Foulger D."/>
            <person name="Fritz C."/>
            <person name="Fujita M."/>
            <person name="Fujita Y."/>
            <person name="Fuma S."/>
            <person name="Galizzi A."/>
            <person name="Galleron N."/>
            <person name="Ghim S.-Y."/>
            <person name="Glaser P."/>
            <person name="Goffeau A."/>
            <person name="Golightly E.J."/>
            <person name="Grandi G."/>
            <person name="Guiseppi G."/>
            <person name="Guy B.J."/>
            <person name="Haga K."/>
            <person name="Haiech J."/>
            <person name="Harwood C.R."/>
            <person name="Henaut A."/>
            <person name="Hilbert H."/>
            <person name="Holsappel S."/>
            <person name="Hosono S."/>
            <person name="Hullo M.-F."/>
            <person name="Itaya M."/>
            <person name="Jones L.-M."/>
            <person name="Joris B."/>
            <person name="Karamata D."/>
            <person name="Kasahara Y."/>
            <person name="Klaerr-Blanchard M."/>
            <person name="Klein C."/>
            <person name="Kobayashi Y."/>
            <person name="Koetter P."/>
            <person name="Koningstein G."/>
            <person name="Krogh S."/>
            <person name="Kumano M."/>
            <person name="Kurita K."/>
            <person name="Lapidus A."/>
            <person name="Lardinois S."/>
            <person name="Lauber J."/>
            <person name="Lazarevic V."/>
            <person name="Lee S.-M."/>
            <person name="Levine A."/>
            <person name="Liu H."/>
            <person name="Masuda S."/>
            <person name="Mauel C."/>
            <person name="Medigue C."/>
            <person name="Medina N."/>
            <person name="Mellado R.P."/>
            <person name="Mizuno M."/>
            <person name="Moestl D."/>
            <person name="Nakai S."/>
            <person name="Noback M."/>
            <person name="Noone D."/>
            <person name="O'Reilly M."/>
            <person name="Ogawa K."/>
            <person name="Ogiwara A."/>
            <person name="Oudega B."/>
            <person name="Park S.-H."/>
            <person name="Parro V."/>
            <person name="Pohl T.M."/>
            <person name="Portetelle D."/>
            <person name="Porwollik S."/>
            <person name="Prescott A.M."/>
            <person name="Presecan E."/>
            <person name="Pujic P."/>
            <person name="Purnelle B."/>
            <person name="Rapoport G."/>
            <person name="Rey M."/>
            <person name="Reynolds S."/>
            <person name="Rieger M."/>
            <person name="Rivolta C."/>
            <person name="Rocha E."/>
            <person name="Roche B."/>
            <person name="Rose M."/>
            <person name="Sadaie Y."/>
            <person name="Sato T."/>
            <person name="Scanlan E."/>
            <person name="Schleich S."/>
            <person name="Schroeter R."/>
            <person name="Scoffone F."/>
            <person name="Sekiguchi J."/>
            <person name="Sekowska A."/>
            <person name="Seror S.J."/>
            <person name="Serror P."/>
            <person name="Shin B.-S."/>
            <person name="Soldo B."/>
            <person name="Sorokin A."/>
            <person name="Tacconi E."/>
            <person name="Takagi T."/>
            <person name="Takahashi H."/>
            <person name="Takemaru K."/>
            <person name="Takeuchi M."/>
            <person name="Tamakoshi A."/>
            <person name="Tanaka T."/>
            <person name="Terpstra P."/>
            <person name="Tognoni A."/>
            <person name="Tosato V."/>
            <person name="Uchiyama S."/>
            <person name="Vandenbol M."/>
            <person name="Vannier F."/>
            <person name="Vassarotti A."/>
            <person name="Viari A."/>
            <person name="Wambutt R."/>
            <person name="Wedler E."/>
            <person name="Wedler H."/>
            <person name="Weitzenegger T."/>
            <person name="Winters P."/>
            <person name="Wipat A."/>
            <person name="Yamamoto H."/>
            <person name="Yamane K."/>
            <person name="Yasumoto K."/>
            <person name="Yata K."/>
            <person name="Yoshida K."/>
            <person name="Yoshikawa H.-F."/>
            <person name="Zumstein E."/>
            <person name="Yoshikawa H."/>
            <person name="Danchin A."/>
        </authorList>
    </citation>
    <scope>NUCLEOTIDE SEQUENCE [LARGE SCALE GENOMIC DNA]</scope>
    <source>
        <strain>168</strain>
    </source>
</reference>
<accession>P11045</accession>
<name>DYR_BACSU</name>
<evidence type="ECO:0000250" key="1"/>
<evidence type="ECO:0000255" key="2">
    <source>
        <dbReference type="PROSITE-ProRule" id="PRU00660"/>
    </source>
</evidence>
<evidence type="ECO:0000305" key="3"/>
<evidence type="ECO:0007829" key="4">
    <source>
        <dbReference type="PDB" id="8UVZ"/>
    </source>
</evidence>
<sequence length="168" mass="19176">MISFIFAMDANRLIGKDNDLPWHLPNDLAYFKKITSGHSIIMGRKTFESIGRPLPNRKNIVVTSAPDSEFQGCTVVSSLKDVLDICSGPEECFVIGGAQLYTDLFPYADRLYMTKIHHEFEGDRHFPEFDESNWKLVSSEQGTKDEKNPYDYEFLMYEKKNSSKAGGF</sequence>
<comment type="function">
    <text evidence="1">Key enzyme in folate metabolism. Catalyzes an essential reaction for de novo glycine and purine synthesis, and for DNA precursor synthesis (By similarity).</text>
</comment>
<comment type="catalytic activity">
    <reaction evidence="2">
        <text>(6S)-5,6,7,8-tetrahydrofolate + NADP(+) = 7,8-dihydrofolate + NADPH + H(+)</text>
        <dbReference type="Rhea" id="RHEA:15009"/>
        <dbReference type="ChEBI" id="CHEBI:15378"/>
        <dbReference type="ChEBI" id="CHEBI:57451"/>
        <dbReference type="ChEBI" id="CHEBI:57453"/>
        <dbReference type="ChEBI" id="CHEBI:57783"/>
        <dbReference type="ChEBI" id="CHEBI:58349"/>
        <dbReference type="EC" id="1.5.1.3"/>
    </reaction>
</comment>
<comment type="pathway">
    <text>Cofactor biosynthesis; tetrahydrofolate biosynthesis; 5,6,7,8-tetrahydrofolate from 7,8-dihydrofolate: step 1/1.</text>
</comment>
<comment type="similarity">
    <text evidence="3">Belongs to the dihydrofolate reductase family.</text>
</comment>
<feature type="chain" id="PRO_0000186382" description="Dihydrofolate reductase">
    <location>
        <begin position="1"/>
        <end position="168"/>
    </location>
</feature>
<feature type="domain" description="DHFR" evidence="2">
    <location>
        <begin position="1"/>
        <end position="159"/>
    </location>
</feature>
<feature type="binding site" evidence="1">
    <location>
        <begin position="5"/>
        <end position="7"/>
    </location>
    <ligand>
        <name>substrate</name>
    </ligand>
</feature>
<feature type="binding site" evidence="1">
    <location>
        <begin position="6"/>
        <end position="7"/>
    </location>
    <ligand>
        <name>NADP(+)</name>
        <dbReference type="ChEBI" id="CHEBI:58349"/>
    </ligand>
</feature>
<feature type="binding site" evidence="1">
    <location>
        <begin position="14"/>
        <end position="19"/>
    </location>
    <ligand>
        <name>NADP(+)</name>
        <dbReference type="ChEBI" id="CHEBI:58349"/>
    </ligand>
</feature>
<feature type="binding site" evidence="1">
    <location>
        <position position="27"/>
    </location>
    <ligand>
        <name>substrate</name>
    </ligand>
</feature>
<feature type="binding site" evidence="1">
    <location>
        <begin position="43"/>
        <end position="46"/>
    </location>
    <ligand>
        <name>NADP(+)</name>
        <dbReference type="ChEBI" id="CHEBI:58349"/>
    </ligand>
</feature>
<feature type="binding site" evidence="1">
    <location>
        <position position="57"/>
    </location>
    <ligand>
        <name>substrate</name>
    </ligand>
</feature>
<feature type="binding site" evidence="1">
    <location>
        <begin position="62"/>
        <end position="65"/>
    </location>
    <ligand>
        <name>NADP(+)</name>
        <dbReference type="ChEBI" id="CHEBI:58349"/>
    </ligand>
</feature>
<feature type="binding site" evidence="1">
    <location>
        <begin position="95"/>
        <end position="100"/>
    </location>
    <ligand>
        <name>NADP(+)</name>
        <dbReference type="ChEBI" id="CHEBI:58349"/>
    </ligand>
</feature>
<feature type="binding site" evidence="1">
    <location>
        <position position="114"/>
    </location>
    <ligand>
        <name>substrate</name>
    </ligand>
</feature>
<feature type="sequence variant" description="In strain: MI112.">
    <original>A</original>
    <variation>V</variation>
    <location>
        <position position="165"/>
    </location>
</feature>
<feature type="strand" evidence="4">
    <location>
        <begin position="2"/>
        <end position="8"/>
    </location>
</feature>
<feature type="strand" evidence="4">
    <location>
        <begin position="13"/>
        <end position="16"/>
    </location>
</feature>
<feature type="helix" evidence="4">
    <location>
        <begin position="25"/>
        <end position="35"/>
    </location>
</feature>
<feature type="strand" evidence="4">
    <location>
        <begin position="40"/>
        <end position="43"/>
    </location>
</feature>
<feature type="helix" evidence="4">
    <location>
        <begin position="44"/>
        <end position="50"/>
    </location>
</feature>
<feature type="strand" evidence="4">
    <location>
        <begin position="59"/>
        <end position="62"/>
    </location>
</feature>
<feature type="helix" evidence="4">
    <location>
        <begin position="67"/>
        <end position="70"/>
    </location>
</feature>
<feature type="strand" evidence="4">
    <location>
        <begin position="73"/>
        <end position="77"/>
    </location>
</feature>
<feature type="helix" evidence="4">
    <location>
        <begin position="79"/>
        <end position="86"/>
    </location>
</feature>
<feature type="strand" evidence="4">
    <location>
        <begin position="88"/>
        <end position="90"/>
    </location>
</feature>
<feature type="strand" evidence="4">
    <location>
        <begin position="92"/>
        <end position="94"/>
    </location>
</feature>
<feature type="helix" evidence="4">
    <location>
        <begin position="98"/>
        <end position="104"/>
    </location>
</feature>
<feature type="helix" evidence="4">
    <location>
        <begin position="105"/>
        <end position="107"/>
    </location>
</feature>
<feature type="strand" evidence="4">
    <location>
        <begin position="109"/>
        <end position="118"/>
    </location>
</feature>
<feature type="strand" evidence="4">
    <location>
        <begin position="123"/>
        <end position="125"/>
    </location>
</feature>
<feature type="helix" evidence="4">
    <location>
        <begin position="131"/>
        <end position="133"/>
    </location>
</feature>
<feature type="strand" evidence="4">
    <location>
        <begin position="134"/>
        <end position="141"/>
    </location>
</feature>
<feature type="strand" evidence="4">
    <location>
        <begin position="152"/>
        <end position="159"/>
    </location>
</feature>
<protein>
    <recommendedName>
        <fullName>Dihydrofolate reductase</fullName>
        <ecNumber>1.5.1.3</ecNumber>
    </recommendedName>
</protein>
<gene>
    <name type="primary">dfrA</name>
    <name type="ordered locus">BSU21810</name>
</gene>